<proteinExistence type="inferred from homology"/>
<accession>A0R213</accession>
<accession>I7GD77</accession>
<feature type="chain" id="PRO_0000414532" description="Release factor glutamine methyltransferase">
    <location>
        <begin position="1"/>
        <end position="281"/>
    </location>
</feature>
<feature type="binding site" evidence="1">
    <location>
        <position position="141"/>
    </location>
    <ligand>
        <name>S-adenosyl-L-methionine</name>
        <dbReference type="ChEBI" id="CHEBI:59789"/>
    </ligand>
</feature>
<feature type="binding site" evidence="1">
    <location>
        <begin position="185"/>
        <end position="188"/>
    </location>
    <ligand>
        <name>substrate</name>
    </ligand>
</feature>
<feature type="binding site" evidence="1">
    <location>
        <position position="185"/>
    </location>
    <ligand>
        <name>S-adenosyl-L-methionine</name>
        <dbReference type="ChEBI" id="CHEBI:59789"/>
    </ligand>
</feature>
<sequence length="281" mass="29564">MTRLRTAIEAATATLAAAGVATPRIDAELLAAHSLGVDRGRLMFVDDPDPEALAAFEHLVAARAKRIPLQHLVGTAAFGPLTLEVGPGVFIPRPETESLLEWAVAQQLPRDAVIVDLCTGTGALALALAQHRPQARVIAVEDSPAALEYARCNAAGTSVEVLAADVTAPDLLPELDGAVDLVVSNPPYIPEGAELDPEVADHDPAHALFGGPDGMAVIRPIVALAARWLRDGGKCAVEHDDTTSARTVEAFTHDGNFTDVTARHDLTGRPRFVTATRIARS</sequence>
<reference key="1">
    <citation type="submission" date="2006-10" db="EMBL/GenBank/DDBJ databases">
        <authorList>
            <person name="Fleischmann R.D."/>
            <person name="Dodson R.J."/>
            <person name="Haft D.H."/>
            <person name="Merkel J.S."/>
            <person name="Nelson W.C."/>
            <person name="Fraser C.M."/>
        </authorList>
    </citation>
    <scope>NUCLEOTIDE SEQUENCE [LARGE SCALE GENOMIC DNA]</scope>
    <source>
        <strain>ATCC 700084 / mc(2)155</strain>
    </source>
</reference>
<reference key="2">
    <citation type="journal article" date="2007" name="Genome Biol.">
        <title>Interrupted coding sequences in Mycobacterium smegmatis: authentic mutations or sequencing errors?</title>
        <authorList>
            <person name="Deshayes C."/>
            <person name="Perrodou E."/>
            <person name="Gallien S."/>
            <person name="Euphrasie D."/>
            <person name="Schaeffer C."/>
            <person name="Van-Dorsselaer A."/>
            <person name="Poch O."/>
            <person name="Lecompte O."/>
            <person name="Reyrat J.-M."/>
        </authorList>
    </citation>
    <scope>NUCLEOTIDE SEQUENCE [LARGE SCALE GENOMIC DNA]</scope>
    <source>
        <strain>ATCC 700084 / mc(2)155</strain>
    </source>
</reference>
<reference key="3">
    <citation type="journal article" date="2009" name="Genome Res.">
        <title>Ortho-proteogenomics: multiple proteomes investigation through orthology and a new MS-based protocol.</title>
        <authorList>
            <person name="Gallien S."/>
            <person name="Perrodou E."/>
            <person name="Carapito C."/>
            <person name="Deshayes C."/>
            <person name="Reyrat J.-M."/>
            <person name="Van Dorsselaer A."/>
            <person name="Poch O."/>
            <person name="Schaeffer C."/>
            <person name="Lecompte O."/>
        </authorList>
    </citation>
    <scope>NUCLEOTIDE SEQUENCE [LARGE SCALE GENOMIC DNA]</scope>
    <source>
        <strain>ATCC 700084 / mc(2)155</strain>
    </source>
</reference>
<gene>
    <name evidence="1" type="primary">prmC</name>
    <name type="ordered locus">MSMEG_4949</name>
    <name type="ordered locus">MSMEI_4821</name>
</gene>
<evidence type="ECO:0000255" key="1">
    <source>
        <dbReference type="HAMAP-Rule" id="MF_02126"/>
    </source>
</evidence>
<organism>
    <name type="scientific">Mycolicibacterium smegmatis (strain ATCC 700084 / mc(2)155)</name>
    <name type="common">Mycobacterium smegmatis</name>
    <dbReference type="NCBI Taxonomy" id="246196"/>
    <lineage>
        <taxon>Bacteria</taxon>
        <taxon>Bacillati</taxon>
        <taxon>Actinomycetota</taxon>
        <taxon>Actinomycetes</taxon>
        <taxon>Mycobacteriales</taxon>
        <taxon>Mycobacteriaceae</taxon>
        <taxon>Mycolicibacterium</taxon>
    </lineage>
</organism>
<comment type="function">
    <text evidence="1">Methylates the class 1 translation termination release factors RF1/PrfA and RF2/PrfB on the glutamine residue of the universally conserved GGQ motif.</text>
</comment>
<comment type="catalytic activity">
    <reaction evidence="1">
        <text>L-glutaminyl-[peptide chain release factor] + S-adenosyl-L-methionine = N(5)-methyl-L-glutaminyl-[peptide chain release factor] + S-adenosyl-L-homocysteine + H(+)</text>
        <dbReference type="Rhea" id="RHEA:42896"/>
        <dbReference type="Rhea" id="RHEA-COMP:10271"/>
        <dbReference type="Rhea" id="RHEA-COMP:10272"/>
        <dbReference type="ChEBI" id="CHEBI:15378"/>
        <dbReference type="ChEBI" id="CHEBI:30011"/>
        <dbReference type="ChEBI" id="CHEBI:57856"/>
        <dbReference type="ChEBI" id="CHEBI:59789"/>
        <dbReference type="ChEBI" id="CHEBI:61891"/>
        <dbReference type="EC" id="2.1.1.297"/>
    </reaction>
</comment>
<comment type="similarity">
    <text evidence="1">Belongs to the protein N5-glutamine methyltransferase family. PrmC subfamily.</text>
</comment>
<dbReference type="EC" id="2.1.1.297" evidence="1"/>
<dbReference type="EMBL" id="CP000480">
    <property type="protein sequence ID" value="ABK71103.1"/>
    <property type="molecule type" value="Genomic_DNA"/>
</dbReference>
<dbReference type="EMBL" id="CP001663">
    <property type="protein sequence ID" value="AFP41266.1"/>
    <property type="molecule type" value="Genomic_DNA"/>
</dbReference>
<dbReference type="RefSeq" id="WP_011730206.1">
    <property type="nucleotide sequence ID" value="NZ_SIJM01000019.1"/>
</dbReference>
<dbReference type="RefSeq" id="YP_889201.1">
    <property type="nucleotide sequence ID" value="NC_008596.1"/>
</dbReference>
<dbReference type="SMR" id="A0R213"/>
<dbReference type="STRING" id="246196.MSMEG_4949"/>
<dbReference type="PaxDb" id="246196-MSMEI_4821"/>
<dbReference type="GeneID" id="93459616"/>
<dbReference type="KEGG" id="msb:LJ00_24470"/>
<dbReference type="KEGG" id="msg:MSMEI_4821"/>
<dbReference type="KEGG" id="msm:MSMEG_4949"/>
<dbReference type="PATRIC" id="fig|246196.19.peg.4828"/>
<dbReference type="eggNOG" id="COG2890">
    <property type="taxonomic scope" value="Bacteria"/>
</dbReference>
<dbReference type="OrthoDB" id="9800643at2"/>
<dbReference type="Proteomes" id="UP000000757">
    <property type="component" value="Chromosome"/>
</dbReference>
<dbReference type="Proteomes" id="UP000006158">
    <property type="component" value="Chromosome"/>
</dbReference>
<dbReference type="GO" id="GO:0003676">
    <property type="term" value="F:nucleic acid binding"/>
    <property type="evidence" value="ECO:0007669"/>
    <property type="project" value="InterPro"/>
</dbReference>
<dbReference type="GO" id="GO:0102559">
    <property type="term" value="F:protein-(glutamine-N5) methyltransferase activity"/>
    <property type="evidence" value="ECO:0007669"/>
    <property type="project" value="UniProtKB-EC"/>
</dbReference>
<dbReference type="GO" id="GO:0036009">
    <property type="term" value="F:protein-glutamine N-methyltransferase activity"/>
    <property type="evidence" value="ECO:0007669"/>
    <property type="project" value="UniProtKB-UniRule"/>
</dbReference>
<dbReference type="GO" id="GO:0032259">
    <property type="term" value="P:methylation"/>
    <property type="evidence" value="ECO:0007669"/>
    <property type="project" value="UniProtKB-KW"/>
</dbReference>
<dbReference type="CDD" id="cd02440">
    <property type="entry name" value="AdoMet_MTases"/>
    <property type="match status" value="1"/>
</dbReference>
<dbReference type="Gene3D" id="1.10.8.10">
    <property type="entry name" value="DNA helicase RuvA subunit, C-terminal domain"/>
    <property type="match status" value="1"/>
</dbReference>
<dbReference type="Gene3D" id="3.40.50.150">
    <property type="entry name" value="Vaccinia Virus protein VP39"/>
    <property type="match status" value="1"/>
</dbReference>
<dbReference type="HAMAP" id="MF_02126">
    <property type="entry name" value="RF_methyltr_PrmC"/>
    <property type="match status" value="1"/>
</dbReference>
<dbReference type="InterPro" id="IPR002052">
    <property type="entry name" value="DNA_methylase_N6_adenine_CS"/>
</dbReference>
<dbReference type="InterPro" id="IPR004556">
    <property type="entry name" value="HemK-like"/>
</dbReference>
<dbReference type="InterPro" id="IPR050320">
    <property type="entry name" value="N5-glutamine_MTase"/>
</dbReference>
<dbReference type="InterPro" id="IPR040758">
    <property type="entry name" value="PrmC_N"/>
</dbReference>
<dbReference type="InterPro" id="IPR019874">
    <property type="entry name" value="RF_methyltr_PrmC"/>
</dbReference>
<dbReference type="InterPro" id="IPR029063">
    <property type="entry name" value="SAM-dependent_MTases_sf"/>
</dbReference>
<dbReference type="InterPro" id="IPR007848">
    <property type="entry name" value="Small_mtfrase_dom"/>
</dbReference>
<dbReference type="NCBIfam" id="TIGR00536">
    <property type="entry name" value="hemK_fam"/>
    <property type="match status" value="1"/>
</dbReference>
<dbReference type="NCBIfam" id="TIGR03534">
    <property type="entry name" value="RF_mod_PrmC"/>
    <property type="match status" value="1"/>
</dbReference>
<dbReference type="PANTHER" id="PTHR18895">
    <property type="entry name" value="HEMK METHYLTRANSFERASE"/>
    <property type="match status" value="1"/>
</dbReference>
<dbReference type="PANTHER" id="PTHR18895:SF74">
    <property type="entry name" value="MTRF1L RELEASE FACTOR GLUTAMINE METHYLTRANSFERASE"/>
    <property type="match status" value="1"/>
</dbReference>
<dbReference type="Pfam" id="PF05175">
    <property type="entry name" value="MTS"/>
    <property type="match status" value="1"/>
</dbReference>
<dbReference type="Pfam" id="PF17827">
    <property type="entry name" value="PrmC_N"/>
    <property type="match status" value="1"/>
</dbReference>
<dbReference type="SUPFAM" id="SSF53335">
    <property type="entry name" value="S-adenosyl-L-methionine-dependent methyltransferases"/>
    <property type="match status" value="1"/>
</dbReference>
<protein>
    <recommendedName>
        <fullName evidence="1">Release factor glutamine methyltransferase</fullName>
        <shortName evidence="1">RF MTase</shortName>
        <ecNumber evidence="1">2.1.1.297</ecNumber>
    </recommendedName>
    <alternativeName>
        <fullName evidence="1">N5-glutamine methyltransferase PrmC</fullName>
    </alternativeName>
    <alternativeName>
        <fullName evidence="1">Protein-(glutamine-N5) MTase PrmC</fullName>
    </alternativeName>
    <alternativeName>
        <fullName evidence="1">Protein-glutamine N-methyltransferase PrmC</fullName>
    </alternativeName>
</protein>
<keyword id="KW-0489">Methyltransferase</keyword>
<keyword id="KW-1185">Reference proteome</keyword>
<keyword id="KW-0949">S-adenosyl-L-methionine</keyword>
<keyword id="KW-0808">Transferase</keyword>
<name>PRMC_MYCS2</name>